<keyword id="KW-0028">Amino-acid biosynthesis</keyword>
<keyword id="KW-0963">Cytoplasm</keyword>
<keyword id="KW-0521">NADP</keyword>
<keyword id="KW-0560">Oxidoreductase</keyword>
<keyword id="KW-0641">Proline biosynthesis</keyword>
<name>PROA_STRPM</name>
<accession>Q48RY7</accession>
<dbReference type="EC" id="1.2.1.41" evidence="1"/>
<dbReference type="EMBL" id="CP000056">
    <property type="protein sequence ID" value="AAX72523.1"/>
    <property type="molecule type" value="Genomic_DNA"/>
</dbReference>
<dbReference type="RefSeq" id="WP_011018075.1">
    <property type="nucleotide sequence ID" value="NC_007296.2"/>
</dbReference>
<dbReference type="SMR" id="Q48RY7"/>
<dbReference type="KEGG" id="spb:M28_Spy1413"/>
<dbReference type="HOGENOM" id="CLU_030231_0_0_9"/>
<dbReference type="UniPathway" id="UPA00098">
    <property type="reaction ID" value="UER00360"/>
</dbReference>
<dbReference type="GO" id="GO:0005737">
    <property type="term" value="C:cytoplasm"/>
    <property type="evidence" value="ECO:0007669"/>
    <property type="project" value="UniProtKB-SubCell"/>
</dbReference>
<dbReference type="GO" id="GO:0004350">
    <property type="term" value="F:glutamate-5-semialdehyde dehydrogenase activity"/>
    <property type="evidence" value="ECO:0007669"/>
    <property type="project" value="UniProtKB-UniRule"/>
</dbReference>
<dbReference type="GO" id="GO:0050661">
    <property type="term" value="F:NADP binding"/>
    <property type="evidence" value="ECO:0007669"/>
    <property type="project" value="InterPro"/>
</dbReference>
<dbReference type="GO" id="GO:0055129">
    <property type="term" value="P:L-proline biosynthetic process"/>
    <property type="evidence" value="ECO:0007669"/>
    <property type="project" value="UniProtKB-UniRule"/>
</dbReference>
<dbReference type="CDD" id="cd07079">
    <property type="entry name" value="ALDH_F18-19_ProA-GPR"/>
    <property type="match status" value="1"/>
</dbReference>
<dbReference type="FunFam" id="3.40.309.10:FF:000006">
    <property type="entry name" value="Gamma-glutamyl phosphate reductase"/>
    <property type="match status" value="1"/>
</dbReference>
<dbReference type="Gene3D" id="3.40.605.10">
    <property type="entry name" value="Aldehyde Dehydrogenase, Chain A, domain 1"/>
    <property type="match status" value="1"/>
</dbReference>
<dbReference type="Gene3D" id="3.40.309.10">
    <property type="entry name" value="Aldehyde Dehydrogenase, Chain A, domain 2"/>
    <property type="match status" value="1"/>
</dbReference>
<dbReference type="HAMAP" id="MF_00412">
    <property type="entry name" value="ProA"/>
    <property type="match status" value="1"/>
</dbReference>
<dbReference type="InterPro" id="IPR016161">
    <property type="entry name" value="Ald_DH/histidinol_DH"/>
</dbReference>
<dbReference type="InterPro" id="IPR016163">
    <property type="entry name" value="Ald_DH_C"/>
</dbReference>
<dbReference type="InterPro" id="IPR016162">
    <property type="entry name" value="Ald_DH_N"/>
</dbReference>
<dbReference type="InterPro" id="IPR015590">
    <property type="entry name" value="Aldehyde_DH_dom"/>
</dbReference>
<dbReference type="InterPro" id="IPR020593">
    <property type="entry name" value="G-glutamylP_reductase_CS"/>
</dbReference>
<dbReference type="InterPro" id="IPR012134">
    <property type="entry name" value="Glu-5-SA_DH"/>
</dbReference>
<dbReference type="InterPro" id="IPR000965">
    <property type="entry name" value="GPR_dom"/>
</dbReference>
<dbReference type="NCBIfam" id="NF001221">
    <property type="entry name" value="PRK00197.1"/>
    <property type="match status" value="1"/>
</dbReference>
<dbReference type="NCBIfam" id="TIGR00407">
    <property type="entry name" value="proA"/>
    <property type="match status" value="1"/>
</dbReference>
<dbReference type="PANTHER" id="PTHR11063:SF8">
    <property type="entry name" value="DELTA-1-PYRROLINE-5-CARBOXYLATE SYNTHASE"/>
    <property type="match status" value="1"/>
</dbReference>
<dbReference type="PANTHER" id="PTHR11063">
    <property type="entry name" value="GLUTAMATE SEMIALDEHYDE DEHYDROGENASE"/>
    <property type="match status" value="1"/>
</dbReference>
<dbReference type="Pfam" id="PF00171">
    <property type="entry name" value="Aldedh"/>
    <property type="match status" value="2"/>
</dbReference>
<dbReference type="PIRSF" id="PIRSF000151">
    <property type="entry name" value="GPR"/>
    <property type="match status" value="1"/>
</dbReference>
<dbReference type="SUPFAM" id="SSF53720">
    <property type="entry name" value="ALDH-like"/>
    <property type="match status" value="1"/>
</dbReference>
<dbReference type="PROSITE" id="PS01223">
    <property type="entry name" value="PROA"/>
    <property type="match status" value="1"/>
</dbReference>
<protein>
    <recommendedName>
        <fullName evidence="1">Gamma-glutamyl phosphate reductase</fullName>
        <shortName evidence="1">GPR</shortName>
        <ecNumber evidence="1">1.2.1.41</ecNumber>
    </recommendedName>
    <alternativeName>
        <fullName evidence="1">Glutamate-5-semialdehyde dehydrogenase</fullName>
    </alternativeName>
    <alternativeName>
        <fullName evidence="1">Glutamyl-gamma-semialdehyde dehydrogenase</fullName>
        <shortName evidence="1">GSA dehydrogenase</shortName>
    </alternativeName>
</protein>
<evidence type="ECO:0000255" key="1">
    <source>
        <dbReference type="HAMAP-Rule" id="MF_00412"/>
    </source>
</evidence>
<reference key="1">
    <citation type="journal article" date="2005" name="J. Infect. Dis.">
        <title>Genome sequence of a serotype M28 strain of group A Streptococcus: potential new insights into puerperal sepsis and bacterial disease specificity.</title>
        <authorList>
            <person name="Green N.M."/>
            <person name="Zhang S."/>
            <person name="Porcella S.F."/>
            <person name="Nagiec M.J."/>
            <person name="Barbian K.D."/>
            <person name="Beres S.B."/>
            <person name="Lefebvre R.B."/>
            <person name="Musser J.M."/>
        </authorList>
    </citation>
    <scope>NUCLEOTIDE SEQUENCE [LARGE SCALE GENOMIC DNA]</scope>
    <source>
        <strain>MGAS6180</strain>
    </source>
</reference>
<sequence>MTDMRRLGQRAKQASLLIAPLSTQIKNRFLSTLAKALVDDTQTLLAANQKDLANAKEHGISDIMMDRLRLTSERIKAIAQGVQQVADLADPIGQVIKGYTNLDGLKILQKRVPLGVIAMIFESRPNVSVDAFSLAFKTNNAIILRGGKDALHSNKALVKLIRQSLEKSGITPDAVQLVEDPSHAVAEELMQATDYVDVLIPRGGAKLIQTVKEKAKVPVIETGVGNVHIYVDAQADLDMATNIVINAKTKRPSVCNAAEGLVIHEAVAARFIPMLEKAINQVQPVEWRADDKALPLFEQAVPAKAEDFETEFLDYIMSVKVVSSLEEAISWINQHTSHHSEAIITRDIKAAETFQDLVDAAAVYVNASTRFTDGFVFGLGAEIGISTQKMHARGPMGLEALTSTKFYINGDGHIRE</sequence>
<comment type="function">
    <text evidence="1">Catalyzes the NADPH-dependent reduction of L-glutamate 5-phosphate into L-glutamate 5-semialdehyde and phosphate. The product spontaneously undergoes cyclization to form 1-pyrroline-5-carboxylate.</text>
</comment>
<comment type="catalytic activity">
    <reaction evidence="1">
        <text>L-glutamate 5-semialdehyde + phosphate + NADP(+) = L-glutamyl 5-phosphate + NADPH + H(+)</text>
        <dbReference type="Rhea" id="RHEA:19541"/>
        <dbReference type="ChEBI" id="CHEBI:15378"/>
        <dbReference type="ChEBI" id="CHEBI:43474"/>
        <dbReference type="ChEBI" id="CHEBI:57783"/>
        <dbReference type="ChEBI" id="CHEBI:58066"/>
        <dbReference type="ChEBI" id="CHEBI:58274"/>
        <dbReference type="ChEBI" id="CHEBI:58349"/>
        <dbReference type="EC" id="1.2.1.41"/>
    </reaction>
</comment>
<comment type="pathway">
    <text evidence="1">Amino-acid biosynthesis; L-proline biosynthesis; L-glutamate 5-semialdehyde from L-glutamate: step 2/2.</text>
</comment>
<comment type="subcellular location">
    <subcellularLocation>
        <location evidence="1">Cytoplasm</location>
    </subcellularLocation>
</comment>
<comment type="similarity">
    <text evidence="1">Belongs to the gamma-glutamyl phosphate reductase family.</text>
</comment>
<feature type="chain" id="PRO_0000230026" description="Gamma-glutamyl phosphate reductase">
    <location>
        <begin position="1"/>
        <end position="416"/>
    </location>
</feature>
<proteinExistence type="inferred from homology"/>
<gene>
    <name evidence="1" type="primary">proA</name>
    <name type="ordered locus">M28_Spy1413</name>
</gene>
<organism>
    <name type="scientific">Streptococcus pyogenes serotype M28 (strain MGAS6180)</name>
    <dbReference type="NCBI Taxonomy" id="319701"/>
    <lineage>
        <taxon>Bacteria</taxon>
        <taxon>Bacillati</taxon>
        <taxon>Bacillota</taxon>
        <taxon>Bacilli</taxon>
        <taxon>Lactobacillales</taxon>
        <taxon>Streptococcaceae</taxon>
        <taxon>Streptococcus</taxon>
    </lineage>
</organism>